<comment type="function">
    <text evidence="1">An essential GTPase that binds both GDP and GTP, with rapid nucleotide exchange. Plays a role in 16S rRNA processing and 30S ribosomal subunit biogenesis and possibly also in cell cycle regulation and energy metabolism (By similarity).</text>
</comment>
<comment type="subunit">
    <text evidence="1">Monomer.</text>
</comment>
<comment type="subcellular location">
    <subcellularLocation>
        <location>Cytoplasm</location>
    </subcellularLocation>
    <subcellularLocation>
        <location evidence="1">Cell membrane</location>
        <topology evidence="1">Peripheral membrane protein</topology>
    </subcellularLocation>
</comment>
<comment type="similarity">
    <text evidence="3 4">Belongs to the TRAFAC class TrmE-Era-EngA-EngB-Septin-like GTPase superfamily. Era GTPase family.</text>
</comment>
<gene>
    <name type="primary">era</name>
</gene>
<protein>
    <recommendedName>
        <fullName>GTPase Era</fullName>
    </recommendedName>
</protein>
<evidence type="ECO:0000250" key="1"/>
<evidence type="ECO:0000255" key="2"/>
<evidence type="ECO:0000255" key="3">
    <source>
        <dbReference type="PROSITE-ProRule" id="PRU01050"/>
    </source>
</evidence>
<evidence type="ECO:0000305" key="4"/>
<feature type="chain" id="PRO_0000180064" description="GTPase Era">
    <location>
        <begin position="1"/>
        <end position="203" status="greater than"/>
    </location>
</feature>
<feature type="domain" description="Era-type G" evidence="3">
    <location>
        <begin position="3"/>
        <end position="170"/>
    </location>
</feature>
<feature type="region of interest" description="G1" evidence="3">
    <location>
        <begin position="11"/>
        <end position="18"/>
    </location>
</feature>
<feature type="region of interest" description="G2" evidence="3">
    <location>
        <begin position="37"/>
        <end position="41"/>
    </location>
</feature>
<feature type="region of interest" description="G3" evidence="3">
    <location>
        <begin position="58"/>
        <end position="61"/>
    </location>
</feature>
<feature type="region of interest" description="G4" evidence="3">
    <location>
        <begin position="120"/>
        <end position="123"/>
    </location>
</feature>
<feature type="region of interest" description="G5" evidence="3">
    <location>
        <begin position="149"/>
        <end position="151"/>
    </location>
</feature>
<feature type="binding site" evidence="2">
    <location>
        <begin position="11"/>
        <end position="18"/>
    </location>
    <ligand>
        <name>GTP</name>
        <dbReference type="ChEBI" id="CHEBI:37565"/>
    </ligand>
</feature>
<feature type="binding site" evidence="2">
    <location>
        <begin position="58"/>
        <end position="62"/>
    </location>
    <ligand>
        <name>GTP</name>
        <dbReference type="ChEBI" id="CHEBI:37565"/>
    </ligand>
</feature>
<feature type="binding site" evidence="2">
    <location>
        <begin position="120"/>
        <end position="123"/>
    </location>
    <ligand>
        <name>GTP</name>
        <dbReference type="ChEBI" id="CHEBI:37565"/>
    </ligand>
</feature>
<feature type="non-terminal residue">
    <location>
        <position position="203"/>
    </location>
</feature>
<dbReference type="EMBL" id="U31915">
    <property type="protein sequence ID" value="AAF09161.1"/>
    <property type="molecule type" value="Genomic_DNA"/>
</dbReference>
<dbReference type="SMR" id="P0C0C0"/>
<dbReference type="GO" id="GO:0005829">
    <property type="term" value="C:cytosol"/>
    <property type="evidence" value="ECO:0007669"/>
    <property type="project" value="TreeGrafter"/>
</dbReference>
<dbReference type="GO" id="GO:0005886">
    <property type="term" value="C:plasma membrane"/>
    <property type="evidence" value="ECO:0007669"/>
    <property type="project" value="UniProtKB-SubCell"/>
</dbReference>
<dbReference type="GO" id="GO:0005525">
    <property type="term" value="F:GTP binding"/>
    <property type="evidence" value="ECO:0007669"/>
    <property type="project" value="UniProtKB-KW"/>
</dbReference>
<dbReference type="GO" id="GO:0043024">
    <property type="term" value="F:ribosomal small subunit binding"/>
    <property type="evidence" value="ECO:0007669"/>
    <property type="project" value="TreeGrafter"/>
</dbReference>
<dbReference type="GO" id="GO:0019843">
    <property type="term" value="F:rRNA binding"/>
    <property type="evidence" value="ECO:0007669"/>
    <property type="project" value="TreeGrafter"/>
</dbReference>
<dbReference type="GO" id="GO:0000028">
    <property type="term" value="P:ribosomal small subunit assembly"/>
    <property type="evidence" value="ECO:0007669"/>
    <property type="project" value="TreeGrafter"/>
</dbReference>
<dbReference type="CDD" id="cd04163">
    <property type="entry name" value="Era"/>
    <property type="match status" value="1"/>
</dbReference>
<dbReference type="FunFam" id="3.40.50.300:FF:000094">
    <property type="entry name" value="GTPase Era"/>
    <property type="match status" value="1"/>
</dbReference>
<dbReference type="Gene3D" id="3.30.300.20">
    <property type="match status" value="1"/>
</dbReference>
<dbReference type="Gene3D" id="3.40.50.300">
    <property type="entry name" value="P-loop containing nucleotide triphosphate hydrolases"/>
    <property type="match status" value="1"/>
</dbReference>
<dbReference type="InterPro" id="IPR030388">
    <property type="entry name" value="G_ERA_dom"/>
</dbReference>
<dbReference type="InterPro" id="IPR006073">
    <property type="entry name" value="GTP-bd"/>
</dbReference>
<dbReference type="InterPro" id="IPR005662">
    <property type="entry name" value="GTPase_Era-like"/>
</dbReference>
<dbReference type="InterPro" id="IPR015946">
    <property type="entry name" value="KH_dom-like_a/b"/>
</dbReference>
<dbReference type="InterPro" id="IPR027417">
    <property type="entry name" value="P-loop_NTPase"/>
</dbReference>
<dbReference type="InterPro" id="IPR005225">
    <property type="entry name" value="Small_GTP-bd"/>
</dbReference>
<dbReference type="NCBIfam" id="TIGR00436">
    <property type="entry name" value="era"/>
    <property type="match status" value="1"/>
</dbReference>
<dbReference type="NCBIfam" id="NF000908">
    <property type="entry name" value="PRK00089.1"/>
    <property type="match status" value="1"/>
</dbReference>
<dbReference type="NCBIfam" id="TIGR00231">
    <property type="entry name" value="small_GTP"/>
    <property type="match status" value="1"/>
</dbReference>
<dbReference type="PANTHER" id="PTHR42698">
    <property type="entry name" value="GTPASE ERA"/>
    <property type="match status" value="1"/>
</dbReference>
<dbReference type="PANTHER" id="PTHR42698:SF1">
    <property type="entry name" value="GTPASE ERA, MITOCHONDRIAL"/>
    <property type="match status" value="1"/>
</dbReference>
<dbReference type="Pfam" id="PF01926">
    <property type="entry name" value="MMR_HSR1"/>
    <property type="match status" value="1"/>
</dbReference>
<dbReference type="SUPFAM" id="SSF52540">
    <property type="entry name" value="P-loop containing nucleoside triphosphate hydrolases"/>
    <property type="match status" value="1"/>
</dbReference>
<dbReference type="PROSITE" id="PS51713">
    <property type="entry name" value="G_ERA"/>
    <property type="match status" value="1"/>
</dbReference>
<keyword id="KW-1003">Cell membrane</keyword>
<keyword id="KW-0963">Cytoplasm</keyword>
<keyword id="KW-0342">GTP-binding</keyword>
<keyword id="KW-0472">Membrane</keyword>
<keyword id="KW-0547">Nucleotide-binding</keyword>
<keyword id="KW-0690">Ribosome biogenesis</keyword>
<sequence length="203" mass="23065">MFKSGFVAILGRPNVGKSTFLNHVMGQKIAIMSDKAQTTRNKIMGIYTTETEQIVFIDTPGIHKPKTALGDFMVESAYSTLREVETVLFMVPADEKRGKGDDMIIERLKAAKIPVILVINKIDKVHPDQLLEQIDDFRSQMDFKEVVPISALEGNNVPNLIKLLTDNLEEGFQYFPEDHPERFLVSEMVREKVLHLTQQEVPH</sequence>
<proteinExistence type="inferred from homology"/>
<organism>
    <name type="scientific">Streptococcus pyogenes serotype M49</name>
    <dbReference type="NCBI Taxonomy" id="301452"/>
    <lineage>
        <taxon>Bacteria</taxon>
        <taxon>Bacillati</taxon>
        <taxon>Bacillota</taxon>
        <taxon>Bacilli</taxon>
        <taxon>Lactobacillales</taxon>
        <taxon>Streptococcaceae</taxon>
        <taxon>Streptococcus</taxon>
    </lineage>
</organism>
<reference key="1">
    <citation type="submission" date="1995-07" db="EMBL/GenBank/DDBJ databases">
        <authorList>
            <person name="Woischnik M."/>
            <person name="Podbielski A."/>
        </authorList>
    </citation>
    <scope>NUCLEOTIDE SEQUENCE [GENOMIC DNA]</scope>
    <source>
        <strain>CS101 / Serotype M49</strain>
    </source>
</reference>
<accession>P0C0C0</accession>
<accession>Q9RIK5</accession>
<name>ERA_STRP9</name>